<geneLocation type="chloroplast"/>
<comment type="function">
    <text evidence="1">May help in the organization of the PsaL subunit.</text>
</comment>
<comment type="subcellular location">
    <subcellularLocation>
        <location evidence="1">Plastid</location>
        <location evidence="1">Chloroplast thylakoid membrane</location>
        <topology evidence="1">Single-pass membrane protein</topology>
    </subcellularLocation>
</comment>
<comment type="similarity">
    <text evidence="1">Belongs to the PsaI family.</text>
</comment>
<name>PSAI_HUPLU</name>
<keyword id="KW-0150">Chloroplast</keyword>
<keyword id="KW-0472">Membrane</keyword>
<keyword id="KW-0602">Photosynthesis</keyword>
<keyword id="KW-0603">Photosystem I</keyword>
<keyword id="KW-0934">Plastid</keyword>
<keyword id="KW-0793">Thylakoid</keyword>
<keyword id="KW-0812">Transmembrane</keyword>
<keyword id="KW-1133">Transmembrane helix</keyword>
<proteinExistence type="inferred from homology"/>
<accession>Q5SCW1</accession>
<reference key="1">
    <citation type="journal article" date="2005" name="Gene">
        <title>The first complete chloroplast genome sequence of a lycophyte, Huperzia lucidula (Lycopodiaceae).</title>
        <authorList>
            <person name="Wolf P.G."/>
            <person name="Karol K.G."/>
            <person name="Mandoli D.F."/>
            <person name="Kuehl J.V."/>
            <person name="Arumuganathan K."/>
            <person name="Ellis M.W."/>
            <person name="Mishler B.D."/>
            <person name="Kelch D.G."/>
            <person name="Olmstead R.G."/>
            <person name="Boore J.L."/>
        </authorList>
    </citation>
    <scope>NUCLEOTIDE SEQUENCE [LARGE SCALE GENOMIC DNA]</scope>
</reference>
<protein>
    <recommendedName>
        <fullName evidence="1">Photosystem I reaction center subunit VIII</fullName>
        <shortName evidence="1">PSI-I</shortName>
    </recommendedName>
</protein>
<feature type="chain" id="PRO_0000194656" description="Photosystem I reaction center subunit VIII">
    <location>
        <begin position="1"/>
        <end position="36"/>
    </location>
</feature>
<feature type="transmembrane region" description="Helical" evidence="1">
    <location>
        <begin position="9"/>
        <end position="29"/>
    </location>
</feature>
<sequence>MTASYSPSISVPLVGLVFPAITMVLSFIYIERDEIV</sequence>
<gene>
    <name evidence="1" type="primary">psaI</name>
</gene>
<dbReference type="EMBL" id="AY660566">
    <property type="protein sequence ID" value="AAT80715.1"/>
    <property type="molecule type" value="Genomic_DNA"/>
</dbReference>
<dbReference type="RefSeq" id="YP_209519.1">
    <property type="nucleotide sequence ID" value="NC_006861.1"/>
</dbReference>
<dbReference type="SMR" id="Q5SCW1"/>
<dbReference type="GeneID" id="3283742"/>
<dbReference type="GO" id="GO:0009535">
    <property type="term" value="C:chloroplast thylakoid membrane"/>
    <property type="evidence" value="ECO:0007669"/>
    <property type="project" value="UniProtKB-SubCell"/>
</dbReference>
<dbReference type="GO" id="GO:0009522">
    <property type="term" value="C:photosystem I"/>
    <property type="evidence" value="ECO:0007669"/>
    <property type="project" value="UniProtKB-KW"/>
</dbReference>
<dbReference type="GO" id="GO:0015979">
    <property type="term" value="P:photosynthesis"/>
    <property type="evidence" value="ECO:0007669"/>
    <property type="project" value="UniProtKB-UniRule"/>
</dbReference>
<dbReference type="HAMAP" id="MF_00431">
    <property type="entry name" value="PSI_PsaI"/>
    <property type="match status" value="1"/>
</dbReference>
<dbReference type="InterPro" id="IPR001302">
    <property type="entry name" value="PSI_PsaI"/>
</dbReference>
<dbReference type="InterPro" id="IPR036357">
    <property type="entry name" value="PSI_PsaI_sf"/>
</dbReference>
<dbReference type="NCBIfam" id="TIGR03052">
    <property type="entry name" value="PS_I_psaI"/>
    <property type="match status" value="1"/>
</dbReference>
<dbReference type="PANTHER" id="PTHR35775">
    <property type="match status" value="1"/>
</dbReference>
<dbReference type="PANTHER" id="PTHR35775:SF2">
    <property type="entry name" value="PHOTOSYSTEM I REACTION CENTER SUBUNIT VIII"/>
    <property type="match status" value="1"/>
</dbReference>
<dbReference type="Pfam" id="PF00796">
    <property type="entry name" value="PSI_8"/>
    <property type="match status" value="1"/>
</dbReference>
<dbReference type="SUPFAM" id="SSF81540">
    <property type="entry name" value="Subunit VIII of photosystem I reaction centre, PsaI"/>
    <property type="match status" value="1"/>
</dbReference>
<organism>
    <name type="scientific">Huperzia lucidula</name>
    <name type="common">Shining clubmoss</name>
    <name type="synonym">Lycopodium lucidulum</name>
    <dbReference type="NCBI Taxonomy" id="37429"/>
    <lineage>
        <taxon>Eukaryota</taxon>
        <taxon>Viridiplantae</taxon>
        <taxon>Streptophyta</taxon>
        <taxon>Embryophyta</taxon>
        <taxon>Tracheophyta</taxon>
        <taxon>Lycopodiopsida</taxon>
        <taxon>Lycopodiales</taxon>
        <taxon>Lycopodiaceae</taxon>
        <taxon>Huperzioideae</taxon>
        <taxon>Huperzia</taxon>
    </lineage>
</organism>
<evidence type="ECO:0000255" key="1">
    <source>
        <dbReference type="HAMAP-Rule" id="MF_00431"/>
    </source>
</evidence>